<sequence>MARIAGVNIPTNKRVNIALQYIHGIGPKFAREIVTKVGIADDRRVNQLSDAEVLQIREAIDADYQVEGDLRREVSMNIKRLMDLGCYRGLRHRRSLPVRGQRTHTNARTRKGPAKAIAGKKK</sequence>
<feature type="chain" id="PRO_0000230483" description="Small ribosomal subunit protein uS13">
    <location>
        <begin position="1"/>
        <end position="122"/>
    </location>
</feature>
<feature type="region of interest" description="Disordered" evidence="2">
    <location>
        <begin position="97"/>
        <end position="122"/>
    </location>
</feature>
<reference key="1">
    <citation type="journal article" date="2005" name="Infect. Immun.">
        <title>Whole-genome analyses of speciation events in pathogenic Brucellae.</title>
        <authorList>
            <person name="Chain P.S."/>
            <person name="Comerci D.J."/>
            <person name="Tolmasky M.E."/>
            <person name="Larimer F.W."/>
            <person name="Malfatti S.A."/>
            <person name="Vergez L.M."/>
            <person name="Aguero F."/>
            <person name="Land M.L."/>
            <person name="Ugalde R.A."/>
            <person name="Garcia E."/>
        </authorList>
    </citation>
    <scope>NUCLEOTIDE SEQUENCE [LARGE SCALE GENOMIC DNA]</scope>
    <source>
        <strain>2308</strain>
    </source>
</reference>
<evidence type="ECO:0000255" key="1">
    <source>
        <dbReference type="HAMAP-Rule" id="MF_01315"/>
    </source>
</evidence>
<evidence type="ECO:0000256" key="2">
    <source>
        <dbReference type="SAM" id="MobiDB-lite"/>
    </source>
</evidence>
<evidence type="ECO:0000305" key="3"/>
<name>RS13_BRUA2</name>
<organism>
    <name type="scientific">Brucella abortus (strain 2308)</name>
    <dbReference type="NCBI Taxonomy" id="359391"/>
    <lineage>
        <taxon>Bacteria</taxon>
        <taxon>Pseudomonadati</taxon>
        <taxon>Pseudomonadota</taxon>
        <taxon>Alphaproteobacteria</taxon>
        <taxon>Hyphomicrobiales</taxon>
        <taxon>Brucellaceae</taxon>
        <taxon>Brucella/Ochrobactrum group</taxon>
        <taxon>Brucella</taxon>
    </lineage>
</organism>
<proteinExistence type="inferred from homology"/>
<keyword id="KW-1185">Reference proteome</keyword>
<keyword id="KW-0687">Ribonucleoprotein</keyword>
<keyword id="KW-0689">Ribosomal protein</keyword>
<keyword id="KW-0694">RNA-binding</keyword>
<keyword id="KW-0699">rRNA-binding</keyword>
<keyword id="KW-0820">tRNA-binding</keyword>
<dbReference type="EMBL" id="AM040264">
    <property type="protein sequence ID" value="CAJ11189.1"/>
    <property type="molecule type" value="Genomic_DNA"/>
</dbReference>
<dbReference type="RefSeq" id="WP_002964340.1">
    <property type="nucleotide sequence ID" value="NZ_KN046823.1"/>
</dbReference>
<dbReference type="SMR" id="Q2YRT8"/>
<dbReference type="STRING" id="359391.BAB1_1233"/>
<dbReference type="GeneID" id="97533546"/>
<dbReference type="KEGG" id="bmf:BAB1_1233"/>
<dbReference type="PATRIC" id="fig|359391.11.peg.133"/>
<dbReference type="HOGENOM" id="CLU_103849_1_2_5"/>
<dbReference type="PhylomeDB" id="Q2YRT8"/>
<dbReference type="Proteomes" id="UP000002719">
    <property type="component" value="Chromosome I"/>
</dbReference>
<dbReference type="GO" id="GO:0005829">
    <property type="term" value="C:cytosol"/>
    <property type="evidence" value="ECO:0007669"/>
    <property type="project" value="TreeGrafter"/>
</dbReference>
<dbReference type="GO" id="GO:0015935">
    <property type="term" value="C:small ribosomal subunit"/>
    <property type="evidence" value="ECO:0007669"/>
    <property type="project" value="TreeGrafter"/>
</dbReference>
<dbReference type="GO" id="GO:0019843">
    <property type="term" value="F:rRNA binding"/>
    <property type="evidence" value="ECO:0007669"/>
    <property type="project" value="UniProtKB-UniRule"/>
</dbReference>
<dbReference type="GO" id="GO:0003735">
    <property type="term" value="F:structural constituent of ribosome"/>
    <property type="evidence" value="ECO:0007669"/>
    <property type="project" value="InterPro"/>
</dbReference>
<dbReference type="GO" id="GO:0000049">
    <property type="term" value="F:tRNA binding"/>
    <property type="evidence" value="ECO:0007669"/>
    <property type="project" value="UniProtKB-UniRule"/>
</dbReference>
<dbReference type="GO" id="GO:0006412">
    <property type="term" value="P:translation"/>
    <property type="evidence" value="ECO:0007669"/>
    <property type="project" value="UniProtKB-UniRule"/>
</dbReference>
<dbReference type="FunFam" id="1.10.8.50:FF:000001">
    <property type="entry name" value="30S ribosomal protein S13"/>
    <property type="match status" value="1"/>
</dbReference>
<dbReference type="FunFam" id="4.10.910.10:FF:000001">
    <property type="entry name" value="30S ribosomal protein S13"/>
    <property type="match status" value="1"/>
</dbReference>
<dbReference type="Gene3D" id="1.10.8.50">
    <property type="match status" value="1"/>
</dbReference>
<dbReference type="Gene3D" id="4.10.910.10">
    <property type="entry name" value="30s ribosomal protein s13, domain 2"/>
    <property type="match status" value="1"/>
</dbReference>
<dbReference type="HAMAP" id="MF_01315">
    <property type="entry name" value="Ribosomal_uS13"/>
    <property type="match status" value="1"/>
</dbReference>
<dbReference type="InterPro" id="IPR027437">
    <property type="entry name" value="Rbsml_uS13_C"/>
</dbReference>
<dbReference type="InterPro" id="IPR001892">
    <property type="entry name" value="Ribosomal_uS13"/>
</dbReference>
<dbReference type="InterPro" id="IPR010979">
    <property type="entry name" value="Ribosomal_uS13-like_H2TH"/>
</dbReference>
<dbReference type="InterPro" id="IPR019980">
    <property type="entry name" value="Ribosomal_uS13_bac-type"/>
</dbReference>
<dbReference type="InterPro" id="IPR018269">
    <property type="entry name" value="Ribosomal_uS13_CS"/>
</dbReference>
<dbReference type="NCBIfam" id="TIGR03631">
    <property type="entry name" value="uS13_bact"/>
    <property type="match status" value="1"/>
</dbReference>
<dbReference type="PANTHER" id="PTHR10871">
    <property type="entry name" value="30S RIBOSOMAL PROTEIN S13/40S RIBOSOMAL PROTEIN S18"/>
    <property type="match status" value="1"/>
</dbReference>
<dbReference type="PANTHER" id="PTHR10871:SF1">
    <property type="entry name" value="SMALL RIBOSOMAL SUBUNIT PROTEIN US13M"/>
    <property type="match status" value="1"/>
</dbReference>
<dbReference type="Pfam" id="PF00416">
    <property type="entry name" value="Ribosomal_S13"/>
    <property type="match status" value="1"/>
</dbReference>
<dbReference type="PIRSF" id="PIRSF002134">
    <property type="entry name" value="Ribosomal_S13"/>
    <property type="match status" value="1"/>
</dbReference>
<dbReference type="SUPFAM" id="SSF46946">
    <property type="entry name" value="S13-like H2TH domain"/>
    <property type="match status" value="1"/>
</dbReference>
<dbReference type="PROSITE" id="PS00646">
    <property type="entry name" value="RIBOSOMAL_S13_1"/>
    <property type="match status" value="1"/>
</dbReference>
<dbReference type="PROSITE" id="PS50159">
    <property type="entry name" value="RIBOSOMAL_S13_2"/>
    <property type="match status" value="1"/>
</dbReference>
<gene>
    <name evidence="1" type="primary">rpsM</name>
    <name type="ordered locus">BAB1_1233</name>
</gene>
<protein>
    <recommendedName>
        <fullName evidence="1">Small ribosomal subunit protein uS13</fullName>
    </recommendedName>
    <alternativeName>
        <fullName evidence="3">30S ribosomal protein S13</fullName>
    </alternativeName>
</protein>
<accession>Q2YRT8</accession>
<comment type="function">
    <text evidence="1">Located at the top of the head of the 30S subunit, it contacts several helices of the 16S rRNA. In the 70S ribosome it contacts the 23S rRNA (bridge B1a) and protein L5 of the 50S subunit (bridge B1b), connecting the 2 subunits; these bridges are implicated in subunit movement. Contacts the tRNAs in the A and P-sites.</text>
</comment>
<comment type="subunit">
    <text evidence="1">Part of the 30S ribosomal subunit. Forms a loose heterodimer with protein S19. Forms two bridges to the 50S subunit in the 70S ribosome.</text>
</comment>
<comment type="similarity">
    <text evidence="1">Belongs to the universal ribosomal protein uS13 family.</text>
</comment>